<dbReference type="EMBL" id="AF044674">
    <property type="protein sequence ID" value="AAC02995.1"/>
    <property type="molecule type" value="mRNA"/>
</dbReference>
<dbReference type="BMRB" id="O57540"/>
<dbReference type="SMR" id="O57540"/>
<dbReference type="GO" id="GO:0005576">
    <property type="term" value="C:extracellular region"/>
    <property type="evidence" value="ECO:0007669"/>
    <property type="project" value="UniProtKB-SubCell"/>
</dbReference>
<dbReference type="GO" id="GO:0015459">
    <property type="term" value="F:potassium channel regulator activity"/>
    <property type="evidence" value="ECO:0007669"/>
    <property type="project" value="UniProtKB-KW"/>
</dbReference>
<dbReference type="GO" id="GO:0090729">
    <property type="term" value="F:toxin activity"/>
    <property type="evidence" value="ECO:0007669"/>
    <property type="project" value="UniProtKB-KW"/>
</dbReference>
<dbReference type="GO" id="GO:0044564">
    <property type="term" value="P:envenomation resulting in occlusion of the pore of voltage-gated potassium channel in another organism"/>
    <property type="evidence" value="ECO:0000250"/>
    <property type="project" value="UniProtKB"/>
</dbReference>
<dbReference type="FunFam" id="2.20.20.10:FF:000001">
    <property type="entry name" value="Crotamine"/>
    <property type="match status" value="1"/>
</dbReference>
<dbReference type="Gene3D" id="2.20.20.10">
    <property type="entry name" value="Anthopleurin-A"/>
    <property type="match status" value="1"/>
</dbReference>
<dbReference type="InterPro" id="IPR023355">
    <property type="entry name" value="Myo_ane_neurotoxin_sf"/>
</dbReference>
<dbReference type="InterPro" id="IPR000881">
    <property type="entry name" value="Myotoxin"/>
</dbReference>
<dbReference type="Pfam" id="PF00819">
    <property type="entry name" value="Myotoxins"/>
    <property type="match status" value="1"/>
</dbReference>
<dbReference type="PRINTS" id="PR00283">
    <property type="entry name" value="MYOTOXIN"/>
</dbReference>
<dbReference type="SUPFAM" id="SSF57392">
    <property type="entry name" value="Defensin-like"/>
    <property type="match status" value="1"/>
</dbReference>
<dbReference type="PROSITE" id="PS00459">
    <property type="entry name" value="MYOTOXINS_1"/>
    <property type="match status" value="1"/>
</dbReference>
<dbReference type="PROSITE" id="PS51345">
    <property type="entry name" value="MYOTOXINS_2"/>
    <property type="match status" value="1"/>
</dbReference>
<comment type="function">
    <text evidence="2">Cationic peptide that possesses multiple functions. It acts as a cell-penetrating peptide (CPP), and as a potent voltage-gated potassium channel (Kv) inhibitor. It exhibits antimicrobial activities, hind limb paralysis, and severe muscle necrosis by a non-enzymatic mechanism.</text>
</comment>
<comment type="subunit">
    <text evidence="1">Monomer.</text>
</comment>
<comment type="subcellular location">
    <subcellularLocation>
        <location evidence="5">Secreted</location>
    </subcellularLocation>
</comment>
<comment type="tissue specificity">
    <text evidence="5">Expressed by the venom gland.</text>
</comment>
<comment type="similarity">
    <text evidence="4">Belongs to the crotamine-myotoxin family.</text>
</comment>
<proteinExistence type="inferred from homology"/>
<reference key="1">
    <citation type="journal article" date="1999" name="Toxicon">
        <title>Nucleotide sequence of crotamine isoform precursors from a single South American rattlesnake (Crotalus durissus terrificus).</title>
        <authorList>
            <person name="Radis-Baptista G."/>
            <person name="Oguiura N."/>
            <person name="Hayashi M.A.F."/>
            <person name="Camargo M.E."/>
            <person name="Grego K.F."/>
            <person name="Oliveira E.B."/>
            <person name="Yamane T."/>
        </authorList>
    </citation>
    <scope>NUCLEOTIDE SEQUENCE [MRNA]</scope>
    <source>
        <strain>Martinopolis</strain>
        <tissue>Venom gland</tissue>
    </source>
</reference>
<evidence type="ECO:0000250" key="1"/>
<evidence type="ECO:0000250" key="2">
    <source>
        <dbReference type="UniProtKB" id="Q9PWF3"/>
    </source>
</evidence>
<evidence type="ECO:0000303" key="3">
    <source>
    </source>
</evidence>
<evidence type="ECO:0000305" key="4"/>
<evidence type="ECO:0000305" key="5">
    <source>
    </source>
</evidence>
<name>MYC1_CRODU</name>
<protein>
    <recommendedName>
        <fullName evidence="3">Crotamine CRO1</fullName>
    </recommendedName>
</protein>
<gene>
    <name type="primary">CRO1</name>
</gene>
<sequence length="65" mass="7519">MKILYLLFAFLFLAFLSEPGNAYKQCHKKGGHCFPKEKICIPPSSDFGKMDCRWRWKCCKKGSGK</sequence>
<feature type="signal peptide" evidence="2">
    <location>
        <begin position="1"/>
        <end position="22"/>
    </location>
</feature>
<feature type="chain" id="PRO_0000035183" description="Crotamine CRO1">
    <location>
        <begin position="23"/>
        <end position="65"/>
    </location>
</feature>
<feature type="disulfide bond" evidence="2">
    <location>
        <begin position="26"/>
        <end position="58"/>
    </location>
</feature>
<feature type="disulfide bond" evidence="2">
    <location>
        <begin position="33"/>
        <end position="52"/>
    </location>
</feature>
<feature type="disulfide bond" evidence="2">
    <location>
        <begin position="40"/>
        <end position="59"/>
    </location>
</feature>
<organism>
    <name type="scientific">Crotalus durissus terrificus</name>
    <name type="common">South American rattlesnake</name>
    <dbReference type="NCBI Taxonomy" id="8732"/>
    <lineage>
        <taxon>Eukaryota</taxon>
        <taxon>Metazoa</taxon>
        <taxon>Chordata</taxon>
        <taxon>Craniata</taxon>
        <taxon>Vertebrata</taxon>
        <taxon>Euteleostomi</taxon>
        <taxon>Lepidosauria</taxon>
        <taxon>Squamata</taxon>
        <taxon>Bifurcata</taxon>
        <taxon>Unidentata</taxon>
        <taxon>Episquamata</taxon>
        <taxon>Toxicofera</taxon>
        <taxon>Serpentes</taxon>
        <taxon>Colubroidea</taxon>
        <taxon>Viperidae</taxon>
        <taxon>Crotalinae</taxon>
        <taxon>Crotalus</taxon>
    </lineage>
</organism>
<keyword id="KW-0929">Antimicrobial</keyword>
<keyword id="KW-1015">Disulfide bond</keyword>
<keyword id="KW-0872">Ion channel impairing toxin</keyword>
<keyword id="KW-0959">Myotoxin</keyword>
<keyword id="KW-0528">Neurotoxin</keyword>
<keyword id="KW-0632">Potassium channel impairing toxin</keyword>
<keyword id="KW-0964">Secreted</keyword>
<keyword id="KW-0732">Signal</keyword>
<keyword id="KW-0800">Toxin</keyword>
<keyword id="KW-1220">Voltage-gated potassium channel impairing toxin</keyword>
<accession>O57540</accession>